<reference key="1">
    <citation type="journal article" date="2003" name="DNA Res.">
        <title>Complete genome structure of Gloeobacter violaceus PCC 7421, a cyanobacterium that lacks thylakoids.</title>
        <authorList>
            <person name="Nakamura Y."/>
            <person name="Kaneko T."/>
            <person name="Sato S."/>
            <person name="Mimuro M."/>
            <person name="Miyashita H."/>
            <person name="Tsuchiya T."/>
            <person name="Sasamoto S."/>
            <person name="Watanabe A."/>
            <person name="Kawashima K."/>
            <person name="Kishida Y."/>
            <person name="Kiyokawa C."/>
            <person name="Kohara M."/>
            <person name="Matsumoto M."/>
            <person name="Matsuno A."/>
            <person name="Nakazaki N."/>
            <person name="Shimpo S."/>
            <person name="Takeuchi C."/>
            <person name="Yamada M."/>
            <person name="Tabata S."/>
        </authorList>
    </citation>
    <scope>NUCLEOTIDE SEQUENCE [LARGE SCALE GENOMIC DNA]</scope>
    <source>
        <strain>ATCC 29082 / PCC 7421</strain>
    </source>
</reference>
<feature type="chain" id="PRO_0000414525" description="Release factor glutamine methyltransferase">
    <location>
        <begin position="1"/>
        <end position="286"/>
    </location>
</feature>
<feature type="binding site" evidence="1">
    <location>
        <begin position="120"/>
        <end position="124"/>
    </location>
    <ligand>
        <name>S-adenosyl-L-methionine</name>
        <dbReference type="ChEBI" id="CHEBI:59789"/>
    </ligand>
</feature>
<feature type="binding site" evidence="1">
    <location>
        <position position="143"/>
    </location>
    <ligand>
        <name>S-adenosyl-L-methionine</name>
        <dbReference type="ChEBI" id="CHEBI:59789"/>
    </ligand>
</feature>
<feature type="binding site" evidence="1">
    <location>
        <position position="172"/>
    </location>
    <ligand>
        <name>S-adenosyl-L-methionine</name>
        <dbReference type="ChEBI" id="CHEBI:59789"/>
    </ligand>
</feature>
<feature type="binding site" evidence="1">
    <location>
        <begin position="187"/>
        <end position="190"/>
    </location>
    <ligand>
        <name>substrate</name>
    </ligand>
</feature>
<feature type="binding site" evidence="1">
    <location>
        <position position="187"/>
    </location>
    <ligand>
        <name>S-adenosyl-L-methionine</name>
        <dbReference type="ChEBI" id="CHEBI:59789"/>
    </ligand>
</feature>
<dbReference type="EC" id="2.1.1.297" evidence="1"/>
<dbReference type="EMBL" id="BA000045">
    <property type="protein sequence ID" value="BAC89696.1"/>
    <property type="molecule type" value="Genomic_DNA"/>
</dbReference>
<dbReference type="RefSeq" id="NP_924701.1">
    <property type="nucleotide sequence ID" value="NC_005125.1"/>
</dbReference>
<dbReference type="RefSeq" id="WP_011141753.1">
    <property type="nucleotide sequence ID" value="NC_005125.1"/>
</dbReference>
<dbReference type="SMR" id="Q7NJS7"/>
<dbReference type="FunCoup" id="Q7NJS7">
    <property type="interactions" value="308"/>
</dbReference>
<dbReference type="STRING" id="251221.gene:10759247"/>
<dbReference type="EnsemblBacteria" id="BAC89696">
    <property type="protein sequence ID" value="BAC89696"/>
    <property type="gene ID" value="BAC89696"/>
</dbReference>
<dbReference type="KEGG" id="gvi:glr1755"/>
<dbReference type="PATRIC" id="fig|251221.4.peg.1785"/>
<dbReference type="eggNOG" id="COG2890">
    <property type="taxonomic scope" value="Bacteria"/>
</dbReference>
<dbReference type="HOGENOM" id="CLU_018398_3_1_3"/>
<dbReference type="InParanoid" id="Q7NJS7"/>
<dbReference type="OrthoDB" id="9800643at2"/>
<dbReference type="Proteomes" id="UP000000557">
    <property type="component" value="Chromosome"/>
</dbReference>
<dbReference type="GO" id="GO:0003676">
    <property type="term" value="F:nucleic acid binding"/>
    <property type="evidence" value="ECO:0007669"/>
    <property type="project" value="InterPro"/>
</dbReference>
<dbReference type="GO" id="GO:0102559">
    <property type="term" value="F:protein-(glutamine-N5) methyltransferase activity"/>
    <property type="evidence" value="ECO:0007669"/>
    <property type="project" value="UniProtKB-EC"/>
</dbReference>
<dbReference type="GO" id="GO:0036009">
    <property type="term" value="F:protein-glutamine N-methyltransferase activity"/>
    <property type="evidence" value="ECO:0000318"/>
    <property type="project" value="GO_Central"/>
</dbReference>
<dbReference type="GO" id="GO:0032259">
    <property type="term" value="P:methylation"/>
    <property type="evidence" value="ECO:0007669"/>
    <property type="project" value="UniProtKB-KW"/>
</dbReference>
<dbReference type="GO" id="GO:0006415">
    <property type="term" value="P:translational termination"/>
    <property type="evidence" value="ECO:0000318"/>
    <property type="project" value="GO_Central"/>
</dbReference>
<dbReference type="CDD" id="cd02440">
    <property type="entry name" value="AdoMet_MTases"/>
    <property type="match status" value="1"/>
</dbReference>
<dbReference type="Gene3D" id="1.10.8.10">
    <property type="entry name" value="DNA helicase RuvA subunit, C-terminal domain"/>
    <property type="match status" value="1"/>
</dbReference>
<dbReference type="Gene3D" id="3.40.50.150">
    <property type="entry name" value="Vaccinia Virus protein VP39"/>
    <property type="match status" value="1"/>
</dbReference>
<dbReference type="HAMAP" id="MF_02126">
    <property type="entry name" value="RF_methyltr_PrmC"/>
    <property type="match status" value="1"/>
</dbReference>
<dbReference type="InterPro" id="IPR002052">
    <property type="entry name" value="DNA_methylase_N6_adenine_CS"/>
</dbReference>
<dbReference type="InterPro" id="IPR004556">
    <property type="entry name" value="HemK-like"/>
</dbReference>
<dbReference type="InterPro" id="IPR040758">
    <property type="entry name" value="PrmC_N"/>
</dbReference>
<dbReference type="InterPro" id="IPR052663">
    <property type="entry name" value="RF_glutamine_MTase_cyano"/>
</dbReference>
<dbReference type="InterPro" id="IPR019874">
    <property type="entry name" value="RF_methyltr_PrmC"/>
</dbReference>
<dbReference type="InterPro" id="IPR029063">
    <property type="entry name" value="SAM-dependent_MTases_sf"/>
</dbReference>
<dbReference type="InterPro" id="IPR007848">
    <property type="entry name" value="Small_mtfrase_dom"/>
</dbReference>
<dbReference type="NCBIfam" id="TIGR00536">
    <property type="entry name" value="hemK_fam"/>
    <property type="match status" value="1"/>
</dbReference>
<dbReference type="NCBIfam" id="TIGR03534">
    <property type="entry name" value="RF_mod_PrmC"/>
    <property type="match status" value="1"/>
</dbReference>
<dbReference type="PANTHER" id="PTHR47441">
    <property type="match status" value="1"/>
</dbReference>
<dbReference type="PANTHER" id="PTHR47441:SF3">
    <property type="entry name" value="RELEASE FACTOR GLUTAMINE METHYLTRANSFERASE"/>
    <property type="match status" value="1"/>
</dbReference>
<dbReference type="Pfam" id="PF05175">
    <property type="entry name" value="MTS"/>
    <property type="match status" value="1"/>
</dbReference>
<dbReference type="Pfam" id="PF17827">
    <property type="entry name" value="PrmC_N"/>
    <property type="match status" value="1"/>
</dbReference>
<dbReference type="SUPFAM" id="SSF53335">
    <property type="entry name" value="S-adenosyl-L-methionine-dependent methyltransferases"/>
    <property type="match status" value="1"/>
</dbReference>
<evidence type="ECO:0000255" key="1">
    <source>
        <dbReference type="HAMAP-Rule" id="MF_02126"/>
    </source>
</evidence>
<name>PRMC_GLOVI</name>
<sequence length="286" mass="30927">MRQPADGWREQALAEARVHDIDAAEIDYLIEAVTGLDRLRVRLGGPQALEAHREKLAALWRRRIEEAMPLQYLLGTAHWRDLQLQVNPAVLIPRPESEALVDVAVDFCRSCAGARVVDLGTGSGAIAVAVARALPGATVWAVDASEAALVVAGANIERYGLSEQVHLLRGNWFVPLPTQPFDAVLSNPPYIPSAEIAALMPEVRLHEPLSALDGGSDGLDAVRQIIADAARHLRPGGILALEVMAGQGPTVVQLLARDSRYGCIRTVRDWAGIERIVVTYAWARGS</sequence>
<organism>
    <name type="scientific">Gloeobacter violaceus (strain ATCC 29082 / PCC 7421)</name>
    <dbReference type="NCBI Taxonomy" id="251221"/>
    <lineage>
        <taxon>Bacteria</taxon>
        <taxon>Bacillati</taxon>
        <taxon>Cyanobacteriota</taxon>
        <taxon>Cyanophyceae</taxon>
        <taxon>Gloeobacterales</taxon>
        <taxon>Gloeobacteraceae</taxon>
        <taxon>Gloeobacter</taxon>
    </lineage>
</organism>
<protein>
    <recommendedName>
        <fullName evidence="1">Release factor glutamine methyltransferase</fullName>
        <shortName evidence="1">RF MTase</shortName>
        <ecNumber evidence="1">2.1.1.297</ecNumber>
    </recommendedName>
    <alternativeName>
        <fullName evidence="1">N5-glutamine methyltransferase PrmC</fullName>
    </alternativeName>
    <alternativeName>
        <fullName evidence="1">Protein-(glutamine-N5) MTase PrmC</fullName>
    </alternativeName>
    <alternativeName>
        <fullName evidence="1">Protein-glutamine N-methyltransferase PrmC</fullName>
    </alternativeName>
</protein>
<keyword id="KW-0489">Methyltransferase</keyword>
<keyword id="KW-1185">Reference proteome</keyword>
<keyword id="KW-0949">S-adenosyl-L-methionine</keyword>
<keyword id="KW-0808">Transferase</keyword>
<gene>
    <name evidence="1" type="primary">prmC</name>
    <name type="ordered locus">glr1755</name>
</gene>
<accession>Q7NJS7</accession>
<proteinExistence type="inferred from homology"/>
<comment type="function">
    <text evidence="1">Methylates the class 1 translation termination release factors RF1/PrfA and RF2/PrfB on the glutamine residue of the universally conserved GGQ motif.</text>
</comment>
<comment type="catalytic activity">
    <reaction evidence="1">
        <text>L-glutaminyl-[peptide chain release factor] + S-adenosyl-L-methionine = N(5)-methyl-L-glutaminyl-[peptide chain release factor] + S-adenosyl-L-homocysteine + H(+)</text>
        <dbReference type="Rhea" id="RHEA:42896"/>
        <dbReference type="Rhea" id="RHEA-COMP:10271"/>
        <dbReference type="Rhea" id="RHEA-COMP:10272"/>
        <dbReference type="ChEBI" id="CHEBI:15378"/>
        <dbReference type="ChEBI" id="CHEBI:30011"/>
        <dbReference type="ChEBI" id="CHEBI:57856"/>
        <dbReference type="ChEBI" id="CHEBI:59789"/>
        <dbReference type="ChEBI" id="CHEBI:61891"/>
        <dbReference type="EC" id="2.1.1.297"/>
    </reaction>
</comment>
<comment type="similarity">
    <text evidence="1">Belongs to the protein N5-glutamine methyltransferase family. PrmC subfamily.</text>
</comment>